<organism>
    <name type="scientific">Schizosaccharomyces pombe (strain 972 / ATCC 24843)</name>
    <name type="common">Fission yeast</name>
    <dbReference type="NCBI Taxonomy" id="284812"/>
    <lineage>
        <taxon>Eukaryota</taxon>
        <taxon>Fungi</taxon>
        <taxon>Dikarya</taxon>
        <taxon>Ascomycota</taxon>
        <taxon>Taphrinomycotina</taxon>
        <taxon>Schizosaccharomycetes</taxon>
        <taxon>Schizosaccharomycetales</taxon>
        <taxon>Schizosaccharomycetaceae</taxon>
        <taxon>Schizosaccharomyces</taxon>
    </lineage>
</organism>
<gene>
    <name type="primary">fsv1</name>
    <name type="ORF">SPAC6F12.03c</name>
</gene>
<accession>O14222</accession>
<accession>P78861</accession>
<dbReference type="EMBL" id="D89211">
    <property type="protein sequence ID" value="BAA13872.1"/>
    <property type="molecule type" value="mRNA"/>
</dbReference>
<dbReference type="EMBL" id="CU329670">
    <property type="protein sequence ID" value="CAB11087.1"/>
    <property type="molecule type" value="Genomic_DNA"/>
</dbReference>
<dbReference type="PIR" id="T11654">
    <property type="entry name" value="T11654"/>
</dbReference>
<dbReference type="PIR" id="T43015">
    <property type="entry name" value="T43015"/>
</dbReference>
<dbReference type="RefSeq" id="NP_593289.1">
    <property type="nucleotide sequence ID" value="NM_001018719.2"/>
</dbReference>
<dbReference type="SMR" id="O14222"/>
<dbReference type="BioGRID" id="279386">
    <property type="interactions" value="78"/>
</dbReference>
<dbReference type="FunCoup" id="O14222">
    <property type="interactions" value="18"/>
</dbReference>
<dbReference type="STRING" id="284812.O14222"/>
<dbReference type="iPTMnet" id="O14222"/>
<dbReference type="PaxDb" id="4896-SPAC6F12.03c.1"/>
<dbReference type="EnsemblFungi" id="SPAC6F12.03c.1">
    <property type="protein sequence ID" value="SPAC6F12.03c.1:pep"/>
    <property type="gene ID" value="SPAC6F12.03c"/>
</dbReference>
<dbReference type="GeneID" id="2542946"/>
<dbReference type="KEGG" id="spo:2542946"/>
<dbReference type="PomBase" id="SPAC6F12.03c">
    <property type="gene designation" value="fsv1"/>
</dbReference>
<dbReference type="VEuPathDB" id="FungiDB:SPAC6F12.03c"/>
<dbReference type="eggNOG" id="KOG3202">
    <property type="taxonomic scope" value="Eukaryota"/>
</dbReference>
<dbReference type="HOGENOM" id="CLU_1062292_0_0_1"/>
<dbReference type="InParanoid" id="O14222"/>
<dbReference type="OMA" id="AKQYPRC"/>
<dbReference type="PhylomeDB" id="O14222"/>
<dbReference type="Reactome" id="R-SPO-6811440">
    <property type="pathway name" value="Retrograde transport at the Trans-Golgi-Network"/>
</dbReference>
<dbReference type="PRO" id="PR:O14222"/>
<dbReference type="Proteomes" id="UP000002485">
    <property type="component" value="Chromosome I"/>
</dbReference>
<dbReference type="GO" id="GO:0012505">
    <property type="term" value="C:endomembrane system"/>
    <property type="evidence" value="ECO:0000318"/>
    <property type="project" value="GO_Central"/>
</dbReference>
<dbReference type="GO" id="GO:0000139">
    <property type="term" value="C:Golgi membrane"/>
    <property type="evidence" value="ECO:0007669"/>
    <property type="project" value="UniProtKB-SubCell"/>
</dbReference>
<dbReference type="GO" id="GO:0000138">
    <property type="term" value="C:Golgi trans cisterna"/>
    <property type="evidence" value="ECO:0000314"/>
    <property type="project" value="PomBase"/>
</dbReference>
<dbReference type="GO" id="GO:0005770">
    <property type="term" value="C:late endosome"/>
    <property type="evidence" value="ECO:0000314"/>
    <property type="project" value="PomBase"/>
</dbReference>
<dbReference type="GO" id="GO:0031902">
    <property type="term" value="C:late endosome membrane"/>
    <property type="evidence" value="ECO:0000314"/>
    <property type="project" value="PomBase"/>
</dbReference>
<dbReference type="GO" id="GO:0031201">
    <property type="term" value="C:SNARE complex"/>
    <property type="evidence" value="ECO:0000318"/>
    <property type="project" value="GO_Central"/>
</dbReference>
<dbReference type="GO" id="GO:0005802">
    <property type="term" value="C:trans-Golgi network"/>
    <property type="evidence" value="ECO:0000314"/>
    <property type="project" value="PomBase"/>
</dbReference>
<dbReference type="GO" id="GO:0005484">
    <property type="term" value="F:SNAP receptor activity"/>
    <property type="evidence" value="ECO:0000318"/>
    <property type="project" value="GO_Central"/>
</dbReference>
<dbReference type="GO" id="GO:0000149">
    <property type="term" value="F:SNARE binding"/>
    <property type="evidence" value="ECO:0000318"/>
    <property type="project" value="GO_Central"/>
</dbReference>
<dbReference type="GO" id="GO:0034058">
    <property type="term" value="P:endosomal vesicle fusion"/>
    <property type="evidence" value="ECO:0000315"/>
    <property type="project" value="PomBase"/>
</dbReference>
<dbReference type="GO" id="GO:0006896">
    <property type="term" value="P:Golgi to vacuole transport"/>
    <property type="evidence" value="ECO:0000315"/>
    <property type="project" value="PomBase"/>
</dbReference>
<dbReference type="GO" id="GO:0006886">
    <property type="term" value="P:intracellular protein transport"/>
    <property type="evidence" value="ECO:0000318"/>
    <property type="project" value="GO_Central"/>
</dbReference>
<dbReference type="GO" id="GO:0097576">
    <property type="term" value="P:vacuole fusion"/>
    <property type="evidence" value="ECO:0000316"/>
    <property type="project" value="PomBase"/>
</dbReference>
<dbReference type="GO" id="GO:0048278">
    <property type="term" value="P:vesicle docking"/>
    <property type="evidence" value="ECO:0000318"/>
    <property type="project" value="GO_Central"/>
</dbReference>
<dbReference type="GO" id="GO:0006906">
    <property type="term" value="P:vesicle fusion"/>
    <property type="evidence" value="ECO:0000318"/>
    <property type="project" value="GO_Central"/>
</dbReference>
<dbReference type="CDD" id="cd15859">
    <property type="entry name" value="SNARE_SYN8"/>
    <property type="match status" value="1"/>
</dbReference>
<dbReference type="FunFam" id="1.20.5.110:FF:000060">
    <property type="entry name" value="SNARE complex subunit (Syn8)"/>
    <property type="match status" value="1"/>
</dbReference>
<dbReference type="Gene3D" id="1.20.5.110">
    <property type="match status" value="1"/>
</dbReference>
<dbReference type="InterPro" id="IPR045242">
    <property type="entry name" value="Syntaxin"/>
</dbReference>
<dbReference type="InterPro" id="IPR000727">
    <property type="entry name" value="T_SNARE_dom"/>
</dbReference>
<dbReference type="PANTHER" id="PTHR19957">
    <property type="entry name" value="SYNTAXIN"/>
    <property type="match status" value="1"/>
</dbReference>
<dbReference type="PANTHER" id="PTHR19957:SF124">
    <property type="entry name" value="SYNTAXIN-8"/>
    <property type="match status" value="1"/>
</dbReference>
<dbReference type="Pfam" id="PF05739">
    <property type="entry name" value="SNARE"/>
    <property type="match status" value="1"/>
</dbReference>
<dbReference type="SMART" id="SM00397">
    <property type="entry name" value="t_SNARE"/>
    <property type="match status" value="1"/>
</dbReference>
<dbReference type="SUPFAM" id="SSF58038">
    <property type="entry name" value="SNARE fusion complex"/>
    <property type="match status" value="1"/>
</dbReference>
<dbReference type="PROSITE" id="PS50192">
    <property type="entry name" value="T_SNARE"/>
    <property type="match status" value="1"/>
</dbReference>
<sequence length="247" mass="28266">MSNLLLIIDSVSQKIRDRRKLEEFGQNPDEEIESSLKDVRQELQKLNEEQSRLEKNAQIPEYRVRESEAFLIRMQRRLESAEEEFEKQRRASSIPADGTSAFSANPQVASTNNKLTPLPSLQKTTSSSEGSDIEMEAMYPVDGNDPDPINVNVLAQMHQQMLNEQEESLGGIEASVQRQKRMGYAMNTELSEQNVLLDNMNNDADRIERRFDHAKNRLNKVSRKAKQYPRCFIILLLCALLLLVASI</sequence>
<comment type="function">
    <text evidence="4">Involved in vesicle-mediated protein transport between the Golgi and the vacuole.</text>
</comment>
<comment type="subcellular location">
    <subcellularLocation>
        <location evidence="4">Golgi apparatus membrane</location>
        <topology evidence="4">Peripheral membrane protein</topology>
    </subcellularLocation>
    <subcellularLocation>
        <location evidence="4">Prevacuolar compartment membrane</location>
        <topology evidence="4">Peripheral membrane protein</topology>
    </subcellularLocation>
    <text>Associated with the Golgi and prevacuolar membrane.</text>
</comment>
<name>FSV1_SCHPO</name>
<feature type="chain" id="PRO_0000210268" description="Syntaxin-like protein fsv1">
    <location>
        <begin position="1"/>
        <end position="247"/>
    </location>
</feature>
<feature type="domain" description="t-SNARE coiled-coil homology" evidence="2">
    <location>
        <begin position="159"/>
        <end position="221"/>
    </location>
</feature>
<feature type="region of interest" description="Disordered" evidence="3">
    <location>
        <begin position="88"/>
        <end position="130"/>
    </location>
</feature>
<feature type="coiled-coil region" evidence="1">
    <location>
        <begin position="27"/>
        <end position="94"/>
    </location>
</feature>
<feature type="compositionally biased region" description="Polar residues" evidence="3">
    <location>
        <begin position="100"/>
        <end position="130"/>
    </location>
</feature>
<feature type="sequence conflict" description="In Ref. 1; BAA13872." evidence="5" ref="1">
    <original>R</original>
    <variation>S</variation>
    <location>
        <position position="178"/>
    </location>
</feature>
<feature type="sequence conflict" description="In Ref. 1; BAA13872." evidence="5" ref="1">
    <original>Q</original>
    <variation>P</variation>
    <location>
        <position position="193"/>
    </location>
</feature>
<feature type="sequence conflict" description="In Ref. 1; BAA13872." evidence="5" ref="1">
    <original>A</original>
    <variation>P</variation>
    <location>
        <position position="214"/>
    </location>
</feature>
<keyword id="KW-0175">Coiled coil</keyword>
<keyword id="KW-0333">Golgi apparatus</keyword>
<keyword id="KW-0472">Membrane</keyword>
<keyword id="KW-0653">Protein transport</keyword>
<keyword id="KW-1185">Reference proteome</keyword>
<keyword id="KW-0813">Transport</keyword>
<proteinExistence type="evidence at transcript level"/>
<protein>
    <recommendedName>
        <fullName>Syntaxin-like protein fsv1</fullName>
    </recommendedName>
</protein>
<evidence type="ECO:0000255" key="1"/>
<evidence type="ECO:0000255" key="2">
    <source>
        <dbReference type="PROSITE-ProRule" id="PRU00202"/>
    </source>
</evidence>
<evidence type="ECO:0000256" key="3">
    <source>
        <dbReference type="SAM" id="MobiDB-lite"/>
    </source>
</evidence>
<evidence type="ECO:0000269" key="4">
    <source>
    </source>
</evidence>
<evidence type="ECO:0000305" key="5"/>
<reference key="1">
    <citation type="journal article" date="1997" name="DNA Res.">
        <title>Identification of open reading frames in Schizosaccharomyces pombe cDNAs.</title>
        <authorList>
            <person name="Yoshioka S."/>
            <person name="Kato K."/>
            <person name="Nakai K."/>
            <person name="Okayama H."/>
            <person name="Nojima H."/>
        </authorList>
    </citation>
    <scope>NUCLEOTIDE SEQUENCE [LARGE SCALE MRNA]</scope>
    <source>
        <strain>PR745</strain>
    </source>
</reference>
<reference key="2">
    <citation type="journal article" date="2002" name="Nature">
        <title>The genome sequence of Schizosaccharomyces pombe.</title>
        <authorList>
            <person name="Wood V."/>
            <person name="Gwilliam R."/>
            <person name="Rajandream M.A."/>
            <person name="Lyne M.H."/>
            <person name="Lyne R."/>
            <person name="Stewart A."/>
            <person name="Sgouros J.G."/>
            <person name="Peat N."/>
            <person name="Hayles J."/>
            <person name="Baker S.G."/>
            <person name="Basham D."/>
            <person name="Bowman S."/>
            <person name="Brooks K."/>
            <person name="Brown D."/>
            <person name="Brown S."/>
            <person name="Chillingworth T."/>
            <person name="Churcher C.M."/>
            <person name="Collins M."/>
            <person name="Connor R."/>
            <person name="Cronin A."/>
            <person name="Davis P."/>
            <person name="Feltwell T."/>
            <person name="Fraser A."/>
            <person name="Gentles S."/>
            <person name="Goble A."/>
            <person name="Hamlin N."/>
            <person name="Harris D.E."/>
            <person name="Hidalgo J."/>
            <person name="Hodgson G."/>
            <person name="Holroyd S."/>
            <person name="Hornsby T."/>
            <person name="Howarth S."/>
            <person name="Huckle E.J."/>
            <person name="Hunt S."/>
            <person name="Jagels K."/>
            <person name="James K.D."/>
            <person name="Jones L."/>
            <person name="Jones M."/>
            <person name="Leather S."/>
            <person name="McDonald S."/>
            <person name="McLean J."/>
            <person name="Mooney P."/>
            <person name="Moule S."/>
            <person name="Mungall K.L."/>
            <person name="Murphy L.D."/>
            <person name="Niblett D."/>
            <person name="Odell C."/>
            <person name="Oliver K."/>
            <person name="O'Neil S."/>
            <person name="Pearson D."/>
            <person name="Quail M.A."/>
            <person name="Rabbinowitsch E."/>
            <person name="Rutherford K.M."/>
            <person name="Rutter S."/>
            <person name="Saunders D."/>
            <person name="Seeger K."/>
            <person name="Sharp S."/>
            <person name="Skelton J."/>
            <person name="Simmonds M.N."/>
            <person name="Squares R."/>
            <person name="Squares S."/>
            <person name="Stevens K."/>
            <person name="Taylor K."/>
            <person name="Taylor R.G."/>
            <person name="Tivey A."/>
            <person name="Walsh S.V."/>
            <person name="Warren T."/>
            <person name="Whitehead S."/>
            <person name="Woodward J.R."/>
            <person name="Volckaert G."/>
            <person name="Aert R."/>
            <person name="Robben J."/>
            <person name="Grymonprez B."/>
            <person name="Weltjens I."/>
            <person name="Vanstreels E."/>
            <person name="Rieger M."/>
            <person name="Schaefer M."/>
            <person name="Mueller-Auer S."/>
            <person name="Gabel C."/>
            <person name="Fuchs M."/>
            <person name="Duesterhoeft A."/>
            <person name="Fritzc C."/>
            <person name="Holzer E."/>
            <person name="Moestl D."/>
            <person name="Hilbert H."/>
            <person name="Borzym K."/>
            <person name="Langer I."/>
            <person name="Beck A."/>
            <person name="Lehrach H."/>
            <person name="Reinhardt R."/>
            <person name="Pohl T.M."/>
            <person name="Eger P."/>
            <person name="Zimmermann W."/>
            <person name="Wedler H."/>
            <person name="Wambutt R."/>
            <person name="Purnelle B."/>
            <person name="Goffeau A."/>
            <person name="Cadieu E."/>
            <person name="Dreano S."/>
            <person name="Gloux S."/>
            <person name="Lelaure V."/>
            <person name="Mottier S."/>
            <person name="Galibert F."/>
            <person name="Aves S.J."/>
            <person name="Xiang Z."/>
            <person name="Hunt C."/>
            <person name="Moore K."/>
            <person name="Hurst S.M."/>
            <person name="Lucas M."/>
            <person name="Rochet M."/>
            <person name="Gaillardin C."/>
            <person name="Tallada V.A."/>
            <person name="Garzon A."/>
            <person name="Thode G."/>
            <person name="Daga R.R."/>
            <person name="Cruzado L."/>
            <person name="Jimenez J."/>
            <person name="Sanchez M."/>
            <person name="del Rey F."/>
            <person name="Benito J."/>
            <person name="Dominguez A."/>
            <person name="Revuelta J.L."/>
            <person name="Moreno S."/>
            <person name="Armstrong J."/>
            <person name="Forsburg S.L."/>
            <person name="Cerutti L."/>
            <person name="Lowe T."/>
            <person name="McCombie W.R."/>
            <person name="Paulsen I."/>
            <person name="Potashkin J."/>
            <person name="Shpakovski G.V."/>
            <person name="Ussery D."/>
            <person name="Barrell B.G."/>
            <person name="Nurse P."/>
        </authorList>
    </citation>
    <scope>NUCLEOTIDE SEQUENCE [LARGE SCALE GENOMIC DNA]</scope>
    <source>
        <strain>972 / ATCC 24843</strain>
    </source>
</reference>
<reference key="3">
    <citation type="journal article" date="2003" name="Biochem. Biophys. Res. Commun.">
        <title>Identification of a SNARE protein required for vacuolar protein transport in Schizosaccharomyces pombe.</title>
        <authorList>
            <person name="Takegawa K."/>
            <person name="Hosomi A."/>
            <person name="Iwaki T."/>
            <person name="Fujita Y."/>
            <person name="Morita T."/>
            <person name="Tanaka N."/>
        </authorList>
    </citation>
    <scope>FUNCTION</scope>
    <scope>SUBCELLULAR LOCATION</scope>
</reference>